<feature type="chain" id="PRO_1000137882" description="tRNA(Ile)-lysidine synthase">
    <location>
        <begin position="1"/>
        <end position="427"/>
    </location>
</feature>
<feature type="binding site" evidence="1">
    <location>
        <begin position="29"/>
        <end position="34"/>
    </location>
    <ligand>
        <name>ATP</name>
        <dbReference type="ChEBI" id="CHEBI:30616"/>
    </ligand>
</feature>
<dbReference type="EC" id="6.3.4.19" evidence="1"/>
<dbReference type="EMBL" id="CP001185">
    <property type="protein sequence ID" value="ACJ74932.1"/>
    <property type="molecule type" value="Genomic_DNA"/>
</dbReference>
<dbReference type="RefSeq" id="WP_012579581.1">
    <property type="nucleotide sequence ID" value="NC_011653.1"/>
</dbReference>
<dbReference type="SMR" id="B7IFR8"/>
<dbReference type="STRING" id="484019.THA_441"/>
<dbReference type="KEGG" id="taf:THA_441"/>
<dbReference type="eggNOG" id="COG0037">
    <property type="taxonomic scope" value="Bacteria"/>
</dbReference>
<dbReference type="HOGENOM" id="CLU_018869_0_1_0"/>
<dbReference type="OrthoDB" id="9807403at2"/>
<dbReference type="Proteomes" id="UP000002453">
    <property type="component" value="Chromosome"/>
</dbReference>
<dbReference type="GO" id="GO:0005737">
    <property type="term" value="C:cytoplasm"/>
    <property type="evidence" value="ECO:0007669"/>
    <property type="project" value="UniProtKB-SubCell"/>
</dbReference>
<dbReference type="GO" id="GO:0005524">
    <property type="term" value="F:ATP binding"/>
    <property type="evidence" value="ECO:0007669"/>
    <property type="project" value="UniProtKB-UniRule"/>
</dbReference>
<dbReference type="GO" id="GO:0032267">
    <property type="term" value="F:tRNA(Ile)-lysidine synthase activity"/>
    <property type="evidence" value="ECO:0007669"/>
    <property type="project" value="UniProtKB-EC"/>
</dbReference>
<dbReference type="GO" id="GO:0006400">
    <property type="term" value="P:tRNA modification"/>
    <property type="evidence" value="ECO:0007669"/>
    <property type="project" value="UniProtKB-UniRule"/>
</dbReference>
<dbReference type="CDD" id="cd01992">
    <property type="entry name" value="TilS_N"/>
    <property type="match status" value="1"/>
</dbReference>
<dbReference type="Gene3D" id="3.40.50.620">
    <property type="entry name" value="HUPs"/>
    <property type="match status" value="1"/>
</dbReference>
<dbReference type="HAMAP" id="MF_01161">
    <property type="entry name" value="tRNA_Ile_lys_synt"/>
    <property type="match status" value="1"/>
</dbReference>
<dbReference type="InterPro" id="IPR012796">
    <property type="entry name" value="Lysidine-tRNA-synth_C"/>
</dbReference>
<dbReference type="InterPro" id="IPR014729">
    <property type="entry name" value="Rossmann-like_a/b/a_fold"/>
</dbReference>
<dbReference type="InterPro" id="IPR011063">
    <property type="entry name" value="TilS/TtcA_N"/>
</dbReference>
<dbReference type="InterPro" id="IPR012094">
    <property type="entry name" value="tRNA_Ile_lys_synt"/>
</dbReference>
<dbReference type="InterPro" id="IPR012795">
    <property type="entry name" value="tRNA_Ile_lys_synt_N"/>
</dbReference>
<dbReference type="NCBIfam" id="TIGR02433">
    <property type="entry name" value="lysidine_TilS_C"/>
    <property type="match status" value="1"/>
</dbReference>
<dbReference type="NCBIfam" id="TIGR02432">
    <property type="entry name" value="lysidine_TilS_N"/>
    <property type="match status" value="1"/>
</dbReference>
<dbReference type="PANTHER" id="PTHR43033">
    <property type="entry name" value="TRNA(ILE)-LYSIDINE SYNTHASE-RELATED"/>
    <property type="match status" value="1"/>
</dbReference>
<dbReference type="PANTHER" id="PTHR43033:SF1">
    <property type="entry name" value="TRNA(ILE)-LYSIDINE SYNTHASE-RELATED"/>
    <property type="match status" value="1"/>
</dbReference>
<dbReference type="Pfam" id="PF01171">
    <property type="entry name" value="ATP_bind_3"/>
    <property type="match status" value="1"/>
</dbReference>
<dbReference type="Pfam" id="PF11734">
    <property type="entry name" value="TilS_C"/>
    <property type="match status" value="1"/>
</dbReference>
<dbReference type="SMART" id="SM00977">
    <property type="entry name" value="TilS_C"/>
    <property type="match status" value="1"/>
</dbReference>
<dbReference type="SUPFAM" id="SSF52402">
    <property type="entry name" value="Adenine nucleotide alpha hydrolases-like"/>
    <property type="match status" value="1"/>
</dbReference>
<dbReference type="SUPFAM" id="SSF56037">
    <property type="entry name" value="PheT/TilS domain"/>
    <property type="match status" value="1"/>
</dbReference>
<reference key="1">
    <citation type="journal article" date="2009" name="J. Bacteriol.">
        <title>The genome of Thermosipho africanus TCF52B: lateral genetic connections to the Firmicutes and Archaea.</title>
        <authorList>
            <person name="Nesboe C.L."/>
            <person name="Bapteste E."/>
            <person name="Curtis B."/>
            <person name="Dahle H."/>
            <person name="Lopez P."/>
            <person name="Macleod D."/>
            <person name="Dlutek M."/>
            <person name="Bowman S."/>
            <person name="Zhaxybayeva O."/>
            <person name="Birkeland N.-K."/>
            <person name="Doolittle W.F."/>
        </authorList>
    </citation>
    <scope>NUCLEOTIDE SEQUENCE [LARGE SCALE GENOMIC DNA]</scope>
    <source>
        <strain>TCF52B</strain>
    </source>
</reference>
<protein>
    <recommendedName>
        <fullName evidence="1">tRNA(Ile)-lysidine synthase</fullName>
        <ecNumber evidence="1">6.3.4.19</ecNumber>
    </recommendedName>
    <alternativeName>
        <fullName evidence="1">tRNA(Ile)-2-lysyl-cytidine synthase</fullName>
    </alternativeName>
    <alternativeName>
        <fullName evidence="1">tRNA(Ile)-lysidine synthetase</fullName>
    </alternativeName>
</protein>
<gene>
    <name evidence="1" type="primary">tilS</name>
    <name type="ordered locus">THA_441</name>
</gene>
<keyword id="KW-0067">ATP-binding</keyword>
<keyword id="KW-0963">Cytoplasm</keyword>
<keyword id="KW-0436">Ligase</keyword>
<keyword id="KW-0547">Nucleotide-binding</keyword>
<keyword id="KW-1185">Reference proteome</keyword>
<keyword id="KW-0819">tRNA processing</keyword>
<evidence type="ECO:0000255" key="1">
    <source>
        <dbReference type="HAMAP-Rule" id="MF_01161"/>
    </source>
</evidence>
<name>TILS_THEAB</name>
<organism>
    <name type="scientific">Thermosipho africanus (strain TCF52B)</name>
    <dbReference type="NCBI Taxonomy" id="484019"/>
    <lineage>
        <taxon>Bacteria</taxon>
        <taxon>Thermotogati</taxon>
        <taxon>Thermotogota</taxon>
        <taxon>Thermotogae</taxon>
        <taxon>Thermotogales</taxon>
        <taxon>Fervidobacteriaceae</taxon>
        <taxon>Thermosipho</taxon>
    </lineage>
</organism>
<sequence length="427" mass="50205">MLTLLEKFIQKIEEYNLIEENDRILVAVSGGVDSSVLLNLLARVQEYFKFSIFCATVDHGIRKESKEEVKFVYNMAQSLNVECFIKEFDVPLYAKENKLSIEEAARKLRYKFLNEIAKKINANKVATAHNLNDLAETVLFRLARGTGPFGIYGMKPRNGNIIRPLLFFERKEIEQFATENKIPFVVDKTNFDTKYTRNFIRHKIIPIFKEINPLFEQAVLRFVENVWELDSFVKDKLNVETFEFEGRIFFKVPKDEYILVEFIRRKTMEHFGRAPDKEKLDRLKKNLYKTSFKISFWGDYGVEISYGYGVLGKFIEHMNYECSMDCQNNVNFGPFVVKFGNNGIIFKKMNLTIRNYRFGDKTKGGKKLKEIFVEKKVPSFIRRIIPIFVDEDGYVFYIPNVFLDRDYLSKEENGISIKVEMKGGFWF</sequence>
<accession>B7IFR8</accession>
<proteinExistence type="inferred from homology"/>
<comment type="function">
    <text evidence="1">Ligates lysine onto the cytidine present at position 34 of the AUA codon-specific tRNA(Ile) that contains the anticodon CAU, in an ATP-dependent manner. Cytidine is converted to lysidine, thus changing the amino acid specificity of the tRNA from methionine to isoleucine.</text>
</comment>
<comment type="catalytic activity">
    <reaction evidence="1">
        <text>cytidine(34) in tRNA(Ile2) + L-lysine + ATP = lysidine(34) in tRNA(Ile2) + AMP + diphosphate + H(+)</text>
        <dbReference type="Rhea" id="RHEA:43744"/>
        <dbReference type="Rhea" id="RHEA-COMP:10625"/>
        <dbReference type="Rhea" id="RHEA-COMP:10670"/>
        <dbReference type="ChEBI" id="CHEBI:15378"/>
        <dbReference type="ChEBI" id="CHEBI:30616"/>
        <dbReference type="ChEBI" id="CHEBI:32551"/>
        <dbReference type="ChEBI" id="CHEBI:33019"/>
        <dbReference type="ChEBI" id="CHEBI:82748"/>
        <dbReference type="ChEBI" id="CHEBI:83665"/>
        <dbReference type="ChEBI" id="CHEBI:456215"/>
        <dbReference type="EC" id="6.3.4.19"/>
    </reaction>
</comment>
<comment type="subcellular location">
    <subcellularLocation>
        <location evidence="1">Cytoplasm</location>
    </subcellularLocation>
</comment>
<comment type="domain">
    <text>The N-terminal region contains the highly conserved SGGXDS motif, predicted to be a P-loop motif involved in ATP binding.</text>
</comment>
<comment type="similarity">
    <text evidence="1">Belongs to the tRNA(Ile)-lysidine synthase family.</text>
</comment>